<comment type="function">
    <text evidence="1">Catalyzes the ATP-dependent transfer of a sulfur to tRNA to produce 4-thiouridine in position 8 of tRNAs, which functions as a near-UV photosensor. Also catalyzes the transfer of sulfur to the sulfur carrier protein ThiS, forming ThiS-thiocarboxylate. This is a step in the synthesis of thiazole, in the thiamine biosynthesis pathway. The sulfur is donated as persulfide by IscS.</text>
</comment>
<comment type="catalytic activity">
    <reaction evidence="1">
        <text>[ThiI sulfur-carrier protein]-S-sulfanyl-L-cysteine + a uridine in tRNA + 2 reduced [2Fe-2S]-[ferredoxin] + ATP + H(+) = [ThiI sulfur-carrier protein]-L-cysteine + a 4-thiouridine in tRNA + 2 oxidized [2Fe-2S]-[ferredoxin] + AMP + diphosphate</text>
        <dbReference type="Rhea" id="RHEA:24176"/>
        <dbReference type="Rhea" id="RHEA-COMP:10000"/>
        <dbReference type="Rhea" id="RHEA-COMP:10001"/>
        <dbReference type="Rhea" id="RHEA-COMP:13337"/>
        <dbReference type="Rhea" id="RHEA-COMP:13338"/>
        <dbReference type="Rhea" id="RHEA-COMP:13339"/>
        <dbReference type="Rhea" id="RHEA-COMP:13340"/>
        <dbReference type="ChEBI" id="CHEBI:15378"/>
        <dbReference type="ChEBI" id="CHEBI:29950"/>
        <dbReference type="ChEBI" id="CHEBI:30616"/>
        <dbReference type="ChEBI" id="CHEBI:33019"/>
        <dbReference type="ChEBI" id="CHEBI:33737"/>
        <dbReference type="ChEBI" id="CHEBI:33738"/>
        <dbReference type="ChEBI" id="CHEBI:61963"/>
        <dbReference type="ChEBI" id="CHEBI:65315"/>
        <dbReference type="ChEBI" id="CHEBI:136798"/>
        <dbReference type="ChEBI" id="CHEBI:456215"/>
        <dbReference type="EC" id="2.8.1.4"/>
    </reaction>
</comment>
<comment type="catalytic activity">
    <reaction evidence="1">
        <text>[ThiS sulfur-carrier protein]-C-terminal Gly-Gly-AMP + S-sulfanyl-L-cysteinyl-[cysteine desulfurase] + AH2 = [ThiS sulfur-carrier protein]-C-terminal-Gly-aminoethanethioate + L-cysteinyl-[cysteine desulfurase] + A + AMP + 2 H(+)</text>
        <dbReference type="Rhea" id="RHEA:43340"/>
        <dbReference type="Rhea" id="RHEA-COMP:12157"/>
        <dbReference type="Rhea" id="RHEA-COMP:12158"/>
        <dbReference type="Rhea" id="RHEA-COMP:12910"/>
        <dbReference type="Rhea" id="RHEA-COMP:19908"/>
        <dbReference type="ChEBI" id="CHEBI:13193"/>
        <dbReference type="ChEBI" id="CHEBI:15378"/>
        <dbReference type="ChEBI" id="CHEBI:17499"/>
        <dbReference type="ChEBI" id="CHEBI:29950"/>
        <dbReference type="ChEBI" id="CHEBI:61963"/>
        <dbReference type="ChEBI" id="CHEBI:90618"/>
        <dbReference type="ChEBI" id="CHEBI:232372"/>
        <dbReference type="ChEBI" id="CHEBI:456215"/>
    </reaction>
</comment>
<comment type="pathway">
    <text evidence="1">Cofactor biosynthesis; thiamine diphosphate biosynthesis.</text>
</comment>
<comment type="subcellular location">
    <subcellularLocation>
        <location evidence="1">Cytoplasm</location>
    </subcellularLocation>
</comment>
<comment type="similarity">
    <text evidence="1">Belongs to the ThiI family.</text>
</comment>
<feature type="chain" id="PRO_0000154888" description="tRNA sulfurtransferase">
    <location>
        <begin position="1"/>
        <end position="482"/>
    </location>
</feature>
<feature type="domain" description="THUMP" evidence="1">
    <location>
        <begin position="61"/>
        <end position="165"/>
    </location>
</feature>
<feature type="domain" description="Rhodanese" evidence="1">
    <location>
        <begin position="404"/>
        <end position="482"/>
    </location>
</feature>
<feature type="active site" description="Cysteine persulfide intermediate" evidence="1">
    <location>
        <position position="456"/>
    </location>
</feature>
<feature type="binding site" evidence="1">
    <location>
        <begin position="183"/>
        <end position="184"/>
    </location>
    <ligand>
        <name>ATP</name>
        <dbReference type="ChEBI" id="CHEBI:30616"/>
    </ligand>
</feature>
<feature type="binding site" evidence="1">
    <location>
        <position position="265"/>
    </location>
    <ligand>
        <name>ATP</name>
        <dbReference type="ChEBI" id="CHEBI:30616"/>
    </ligand>
</feature>
<feature type="binding site" evidence="1">
    <location>
        <position position="287"/>
    </location>
    <ligand>
        <name>ATP</name>
        <dbReference type="ChEBI" id="CHEBI:30616"/>
    </ligand>
</feature>
<feature type="binding site" evidence="1">
    <location>
        <position position="296"/>
    </location>
    <ligand>
        <name>ATP</name>
        <dbReference type="ChEBI" id="CHEBI:30616"/>
    </ligand>
</feature>
<feature type="disulfide bond" description="Redox-active" evidence="1">
    <location>
        <begin position="344"/>
        <end position="456"/>
    </location>
</feature>
<evidence type="ECO:0000255" key="1">
    <source>
        <dbReference type="HAMAP-Rule" id="MF_00021"/>
    </source>
</evidence>
<accession>Q7MN44</accession>
<reference key="1">
    <citation type="journal article" date="2003" name="Genome Res.">
        <title>Comparative genome analysis of Vibrio vulnificus, a marine pathogen.</title>
        <authorList>
            <person name="Chen C.-Y."/>
            <person name="Wu K.-M."/>
            <person name="Chang Y.-C."/>
            <person name="Chang C.-H."/>
            <person name="Tsai H.-C."/>
            <person name="Liao T.-L."/>
            <person name="Liu Y.-M."/>
            <person name="Chen H.-J."/>
            <person name="Shen A.B.-T."/>
            <person name="Li J.-C."/>
            <person name="Su T.-L."/>
            <person name="Shao C.-P."/>
            <person name="Lee C.-T."/>
            <person name="Hor L.-I."/>
            <person name="Tsai S.-F."/>
        </authorList>
    </citation>
    <scope>NUCLEOTIDE SEQUENCE [LARGE SCALE GENOMIC DNA]</scope>
    <source>
        <strain>YJ016</strain>
    </source>
</reference>
<gene>
    <name evidence="1" type="primary">thiI</name>
    <name type="ordered locus">VV0873</name>
</gene>
<organism>
    <name type="scientific">Vibrio vulnificus (strain YJ016)</name>
    <dbReference type="NCBI Taxonomy" id="196600"/>
    <lineage>
        <taxon>Bacteria</taxon>
        <taxon>Pseudomonadati</taxon>
        <taxon>Pseudomonadota</taxon>
        <taxon>Gammaproteobacteria</taxon>
        <taxon>Vibrionales</taxon>
        <taxon>Vibrionaceae</taxon>
        <taxon>Vibrio</taxon>
    </lineage>
</organism>
<protein>
    <recommendedName>
        <fullName evidence="1">tRNA sulfurtransferase</fullName>
        <ecNumber evidence="1">2.8.1.4</ecNumber>
    </recommendedName>
    <alternativeName>
        <fullName evidence="1">Sulfur carrier protein ThiS sulfurtransferase</fullName>
    </alternativeName>
    <alternativeName>
        <fullName evidence="1">Thiamine biosynthesis protein ThiI</fullName>
    </alternativeName>
    <alternativeName>
        <fullName evidence="1">tRNA 4-thiouridine synthase</fullName>
    </alternativeName>
</protein>
<name>THII_VIBVY</name>
<proteinExistence type="inferred from homology"/>
<keyword id="KW-0067">ATP-binding</keyword>
<keyword id="KW-0963">Cytoplasm</keyword>
<keyword id="KW-1015">Disulfide bond</keyword>
<keyword id="KW-0547">Nucleotide-binding</keyword>
<keyword id="KW-0676">Redox-active center</keyword>
<keyword id="KW-0694">RNA-binding</keyword>
<keyword id="KW-0784">Thiamine biosynthesis</keyword>
<keyword id="KW-0808">Transferase</keyword>
<keyword id="KW-0820">tRNA-binding</keyword>
<sequence length="482" mass="54720">MKFIVKPHPEIFVKSESVRKRFTKILESNIRIIIQNRTESVAVFNRRDHIEVSANSHQYYQQVLEILTTTPGIQQVLEVKQSDFKDLHDIYEQVLELSRERIENKTFVVRAKRRGKHDFTSIELERYVGGGLNQSVESASVKLHNPDITIKIEVVDDKLNQILAHHKGLGGFPLGTQEDLLSLISGGFDSGVSSYLHIKRGSKVHYCFFNLGGPAHEIGVKQVAHFLWNKYGSSAKVRFISVDFEPVVAEILEKVEDGQMGVVLKRMFMRAAGMVAEKFDIQALVTGEALGQVSSQTLTNLRHIDVVTDRLILRPLINWDKDEIIKVARDIGTEDFAKTMPEYCGVISKKPTVKAVKEKLEAEEANFNFDILEQVVRNARQMDIRDIAKESAQAAPEVEQVQAIEEHAVVLDIRSPDEEDDSPLEIDGVEVKHIPFYKLSTQFGDLDQSKTYLLYCARGVMSRLQALYLQEQGFNNVKVYRP</sequence>
<dbReference type="EC" id="2.8.1.4" evidence="1"/>
<dbReference type="EMBL" id="BA000037">
    <property type="protein sequence ID" value="BAC93637.1"/>
    <property type="molecule type" value="Genomic_DNA"/>
</dbReference>
<dbReference type="RefSeq" id="WP_011149684.1">
    <property type="nucleotide sequence ID" value="NC_005139.1"/>
</dbReference>
<dbReference type="SMR" id="Q7MN44"/>
<dbReference type="STRING" id="672.VV93_v1c08120"/>
<dbReference type="KEGG" id="vvy:VV0873"/>
<dbReference type="PATRIC" id="fig|196600.6.peg.879"/>
<dbReference type="eggNOG" id="COG0301">
    <property type="taxonomic scope" value="Bacteria"/>
</dbReference>
<dbReference type="eggNOG" id="COG0607">
    <property type="taxonomic scope" value="Bacteria"/>
</dbReference>
<dbReference type="HOGENOM" id="CLU_037952_4_1_6"/>
<dbReference type="UniPathway" id="UPA00060"/>
<dbReference type="Proteomes" id="UP000002675">
    <property type="component" value="Chromosome I"/>
</dbReference>
<dbReference type="GO" id="GO:0005829">
    <property type="term" value="C:cytosol"/>
    <property type="evidence" value="ECO:0007669"/>
    <property type="project" value="TreeGrafter"/>
</dbReference>
<dbReference type="GO" id="GO:0005524">
    <property type="term" value="F:ATP binding"/>
    <property type="evidence" value="ECO:0007669"/>
    <property type="project" value="UniProtKB-UniRule"/>
</dbReference>
<dbReference type="GO" id="GO:0004810">
    <property type="term" value="F:CCA tRNA nucleotidyltransferase activity"/>
    <property type="evidence" value="ECO:0007669"/>
    <property type="project" value="InterPro"/>
</dbReference>
<dbReference type="GO" id="GO:0000049">
    <property type="term" value="F:tRNA binding"/>
    <property type="evidence" value="ECO:0007669"/>
    <property type="project" value="UniProtKB-UniRule"/>
</dbReference>
<dbReference type="GO" id="GO:0140741">
    <property type="term" value="F:tRNA-uracil-4 sulfurtransferase activity"/>
    <property type="evidence" value="ECO:0007669"/>
    <property type="project" value="UniProtKB-EC"/>
</dbReference>
<dbReference type="GO" id="GO:0009228">
    <property type="term" value="P:thiamine biosynthetic process"/>
    <property type="evidence" value="ECO:0007669"/>
    <property type="project" value="UniProtKB-KW"/>
</dbReference>
<dbReference type="GO" id="GO:0009229">
    <property type="term" value="P:thiamine diphosphate biosynthetic process"/>
    <property type="evidence" value="ECO:0007669"/>
    <property type="project" value="UniProtKB-UniRule"/>
</dbReference>
<dbReference type="GO" id="GO:0052837">
    <property type="term" value="P:thiazole biosynthetic process"/>
    <property type="evidence" value="ECO:0007669"/>
    <property type="project" value="InterPro"/>
</dbReference>
<dbReference type="GO" id="GO:0002937">
    <property type="term" value="P:tRNA 4-thiouridine biosynthesis"/>
    <property type="evidence" value="ECO:0007669"/>
    <property type="project" value="TreeGrafter"/>
</dbReference>
<dbReference type="CDD" id="cd01712">
    <property type="entry name" value="PPase_ThiI"/>
    <property type="match status" value="1"/>
</dbReference>
<dbReference type="CDD" id="cd00158">
    <property type="entry name" value="RHOD"/>
    <property type="match status" value="1"/>
</dbReference>
<dbReference type="CDD" id="cd11716">
    <property type="entry name" value="THUMP_ThiI"/>
    <property type="match status" value="1"/>
</dbReference>
<dbReference type="FunFam" id="3.40.250.10:FF:000003">
    <property type="entry name" value="tRNA sulfurtransferase"/>
    <property type="match status" value="1"/>
</dbReference>
<dbReference type="FunFam" id="3.40.50.620:FF:000029">
    <property type="entry name" value="tRNA sulfurtransferase"/>
    <property type="match status" value="1"/>
</dbReference>
<dbReference type="Gene3D" id="3.30.2130.30">
    <property type="match status" value="1"/>
</dbReference>
<dbReference type="Gene3D" id="3.40.50.620">
    <property type="entry name" value="HUPs"/>
    <property type="match status" value="1"/>
</dbReference>
<dbReference type="Gene3D" id="3.40.250.10">
    <property type="entry name" value="Rhodanese-like domain"/>
    <property type="match status" value="1"/>
</dbReference>
<dbReference type="HAMAP" id="MF_00021">
    <property type="entry name" value="ThiI"/>
    <property type="match status" value="1"/>
</dbReference>
<dbReference type="InterPro" id="IPR001763">
    <property type="entry name" value="Rhodanese-like_dom"/>
</dbReference>
<dbReference type="InterPro" id="IPR036873">
    <property type="entry name" value="Rhodanese-like_dom_sf"/>
</dbReference>
<dbReference type="InterPro" id="IPR014729">
    <property type="entry name" value="Rossmann-like_a/b/a_fold"/>
</dbReference>
<dbReference type="InterPro" id="IPR020536">
    <property type="entry name" value="ThiI_AANH"/>
</dbReference>
<dbReference type="InterPro" id="IPR054173">
    <property type="entry name" value="ThiI_fer"/>
</dbReference>
<dbReference type="InterPro" id="IPR049961">
    <property type="entry name" value="ThiI_N"/>
</dbReference>
<dbReference type="InterPro" id="IPR026340">
    <property type="entry name" value="THII_Thiazole_biosynth_dom"/>
</dbReference>
<dbReference type="InterPro" id="IPR004114">
    <property type="entry name" value="THUMP_dom"/>
</dbReference>
<dbReference type="InterPro" id="IPR049962">
    <property type="entry name" value="THUMP_ThiI"/>
</dbReference>
<dbReference type="InterPro" id="IPR003720">
    <property type="entry name" value="tRNA_STrfase"/>
</dbReference>
<dbReference type="InterPro" id="IPR050102">
    <property type="entry name" value="tRNA_sulfurtransferase_ThiI"/>
</dbReference>
<dbReference type="NCBIfam" id="TIGR04271">
    <property type="entry name" value="ThiI_C_thiazole"/>
    <property type="match status" value="1"/>
</dbReference>
<dbReference type="NCBIfam" id="TIGR00342">
    <property type="entry name" value="tRNA uracil 4-sulfurtransferase ThiI"/>
    <property type="match status" value="1"/>
</dbReference>
<dbReference type="PANTHER" id="PTHR43209">
    <property type="entry name" value="TRNA SULFURTRANSFERASE"/>
    <property type="match status" value="1"/>
</dbReference>
<dbReference type="PANTHER" id="PTHR43209:SF1">
    <property type="entry name" value="TRNA SULFURTRANSFERASE"/>
    <property type="match status" value="1"/>
</dbReference>
<dbReference type="Pfam" id="PF02568">
    <property type="entry name" value="ThiI"/>
    <property type="match status" value="1"/>
</dbReference>
<dbReference type="Pfam" id="PF22025">
    <property type="entry name" value="ThiI_fer"/>
    <property type="match status" value="1"/>
</dbReference>
<dbReference type="Pfam" id="PF02926">
    <property type="entry name" value="THUMP"/>
    <property type="match status" value="1"/>
</dbReference>
<dbReference type="SMART" id="SM00981">
    <property type="entry name" value="THUMP"/>
    <property type="match status" value="1"/>
</dbReference>
<dbReference type="SUPFAM" id="SSF52402">
    <property type="entry name" value="Adenine nucleotide alpha hydrolases-like"/>
    <property type="match status" value="1"/>
</dbReference>
<dbReference type="SUPFAM" id="SSF52821">
    <property type="entry name" value="Rhodanese/Cell cycle control phosphatase"/>
    <property type="match status" value="1"/>
</dbReference>
<dbReference type="SUPFAM" id="SSF143437">
    <property type="entry name" value="THUMP domain-like"/>
    <property type="match status" value="1"/>
</dbReference>
<dbReference type="PROSITE" id="PS50206">
    <property type="entry name" value="RHODANESE_3"/>
    <property type="match status" value="1"/>
</dbReference>
<dbReference type="PROSITE" id="PS51165">
    <property type="entry name" value="THUMP"/>
    <property type="match status" value="1"/>
</dbReference>